<gene>
    <name type="primary">YPEL1</name>
    <name type="ORF">FKSG3</name>
</gene>
<protein>
    <recommendedName>
        <fullName>Protein yippee-like 1</fullName>
    </recommendedName>
</protein>
<sequence length="119" mass="13575">MVKMTKSKTFQAYLPNCHRTYSCIHCRAHLANHDELISKSFQGSQGRAYLFNSVVNVGCGPAEERVLLTGLHAVADIYCENCKTTLGWKYEHAFESSQKYKEGKFIIELAHMIKDNGWE</sequence>
<feature type="chain" id="PRO_0000212381" description="Protein yippee-like 1">
    <location>
        <begin position="1"/>
        <end position="119"/>
    </location>
</feature>
<feature type="domain" description="Yippee" evidence="3">
    <location>
        <begin position="19"/>
        <end position="116"/>
    </location>
</feature>
<feature type="short sequence motif" description="Nuclear localization signal" evidence="2">
    <location>
        <begin position="99"/>
        <end position="104"/>
    </location>
</feature>
<feature type="binding site" evidence="3">
    <location>
        <position position="23"/>
    </location>
    <ligand>
        <name>Zn(2+)</name>
        <dbReference type="ChEBI" id="CHEBI:29105"/>
    </ligand>
</feature>
<feature type="binding site" evidence="3">
    <location>
        <position position="26"/>
    </location>
    <ligand>
        <name>Zn(2+)</name>
        <dbReference type="ChEBI" id="CHEBI:29105"/>
    </ligand>
</feature>
<feature type="binding site" evidence="3">
    <location>
        <position position="79"/>
    </location>
    <ligand>
        <name>Zn(2+)</name>
        <dbReference type="ChEBI" id="CHEBI:29105"/>
    </ligand>
</feature>
<feature type="binding site" evidence="3">
    <location>
        <position position="82"/>
    </location>
    <ligand>
        <name>Zn(2+)</name>
        <dbReference type="ChEBI" id="CHEBI:29105"/>
    </ligand>
</feature>
<feature type="sequence conflict" description="In Ref. 6; AAH74501." evidence="4" ref="6">
    <original>E</original>
    <variation>D</variation>
    <location>
        <position position="108"/>
    </location>
</feature>
<reference key="1">
    <citation type="journal article" date="2004" name="Gene">
        <title>Identification and characterization of a novel gene family YPEL in a wide spectrum of eukaryotic species.</title>
        <authorList>
            <person name="Hosono K."/>
            <person name="Sasaki T."/>
            <person name="Minoshima S."/>
            <person name="Shimizu N."/>
        </authorList>
    </citation>
    <scope>NUCLEOTIDE SEQUENCE [MRNA]</scope>
</reference>
<reference key="2">
    <citation type="submission" date="1998-04" db="EMBL/GenBank/DDBJ databases">
        <title>Human unknown cDNA, complete cds.</title>
        <authorList>
            <person name="Hu G."/>
            <person name="Hui L."/>
        </authorList>
    </citation>
    <scope>NUCLEOTIDE SEQUENCE [MRNA]</scope>
</reference>
<reference key="3">
    <citation type="submission" date="2000-09" db="EMBL/GenBank/DDBJ databases">
        <title>Cloning and characterization of FKSG3, a novel gene related to DiGeorge syndrome.</title>
        <authorList>
            <person name="Wang Y.-G."/>
        </authorList>
    </citation>
    <scope>NUCLEOTIDE SEQUENCE [MRNA]</scope>
</reference>
<reference key="4">
    <citation type="journal article" date="2004" name="Genome Biol.">
        <title>A genome annotation-driven approach to cloning the human ORFeome.</title>
        <authorList>
            <person name="Collins J.E."/>
            <person name="Wright C.L."/>
            <person name="Edwards C.A."/>
            <person name="Davis M.P."/>
            <person name="Grinham J.A."/>
            <person name="Cole C.G."/>
            <person name="Goward M.E."/>
            <person name="Aguado B."/>
            <person name="Mallya M."/>
            <person name="Mokrab Y."/>
            <person name="Huckle E.J."/>
            <person name="Beare D.M."/>
            <person name="Dunham I."/>
        </authorList>
    </citation>
    <scope>NUCLEOTIDE SEQUENCE [LARGE SCALE MRNA]</scope>
</reference>
<reference key="5">
    <citation type="journal article" date="2007" name="BMC Genomics">
        <title>The full-ORF clone resource of the German cDNA consortium.</title>
        <authorList>
            <person name="Bechtel S."/>
            <person name="Rosenfelder H."/>
            <person name="Duda A."/>
            <person name="Schmidt C.P."/>
            <person name="Ernst U."/>
            <person name="Wellenreuther R."/>
            <person name="Mehrle A."/>
            <person name="Schuster C."/>
            <person name="Bahr A."/>
            <person name="Bloecker H."/>
            <person name="Heubner D."/>
            <person name="Hoerlein A."/>
            <person name="Michel G."/>
            <person name="Wedler H."/>
            <person name="Koehrer K."/>
            <person name="Ottenwaelder B."/>
            <person name="Poustka A."/>
            <person name="Wiemann S."/>
            <person name="Schupp I."/>
        </authorList>
    </citation>
    <scope>NUCLEOTIDE SEQUENCE [LARGE SCALE MRNA]</scope>
    <source>
        <tissue>Fetal kidney</tissue>
    </source>
</reference>
<reference key="6">
    <citation type="journal article" date="2004" name="Genome Res.">
        <title>The status, quality, and expansion of the NIH full-length cDNA project: the Mammalian Gene Collection (MGC).</title>
        <authorList>
            <consortium name="The MGC Project Team"/>
        </authorList>
    </citation>
    <scope>NUCLEOTIDE SEQUENCE [LARGE SCALE MRNA]</scope>
    <source>
        <tissue>Brain</tissue>
        <tissue>Testis</tissue>
    </source>
</reference>
<comment type="function">
    <text>May play a role in epithelioid conversion of fibroblasts.</text>
</comment>
<comment type="subcellular location">
    <subcellularLocation>
        <location evidence="1">Nucleus</location>
    </subcellularLocation>
</comment>
<comment type="similarity">
    <text evidence="4">Belongs to the yippee family.</text>
</comment>
<name>YPEL1_HUMAN</name>
<dbReference type="EMBL" id="AB098734">
    <property type="protein sequence ID" value="BAD51375.1"/>
    <property type="molecule type" value="mRNA"/>
</dbReference>
<dbReference type="EMBL" id="AB098735">
    <property type="protein sequence ID" value="BAD51376.1"/>
    <property type="molecule type" value="mRNA"/>
</dbReference>
<dbReference type="EMBL" id="AF060862">
    <property type="protein sequence ID" value="AAC15461.1"/>
    <property type="molecule type" value="mRNA"/>
</dbReference>
<dbReference type="EMBL" id="AF305069">
    <property type="protein sequence ID" value="AAL09353.1"/>
    <property type="molecule type" value="mRNA"/>
</dbReference>
<dbReference type="EMBL" id="CR456376">
    <property type="protein sequence ID" value="CAG30262.1"/>
    <property type="molecule type" value="mRNA"/>
</dbReference>
<dbReference type="EMBL" id="CR933630">
    <property type="protein sequence ID" value="CAI45937.1"/>
    <property type="molecule type" value="Transcribed_RNA"/>
</dbReference>
<dbReference type="EMBL" id="BC034486">
    <property type="protein sequence ID" value="AAH34486.1"/>
    <property type="molecule type" value="mRNA"/>
</dbReference>
<dbReference type="EMBL" id="BC074501">
    <property type="protein sequence ID" value="AAH74501.1"/>
    <property type="molecule type" value="mRNA"/>
</dbReference>
<dbReference type="CCDS" id="CCDS13794.1"/>
<dbReference type="PIR" id="T50835">
    <property type="entry name" value="T50835"/>
</dbReference>
<dbReference type="RefSeq" id="NP_037445.1">
    <property type="nucleotide sequence ID" value="NM_013313.5"/>
</dbReference>
<dbReference type="RefSeq" id="XP_047297311.1">
    <property type="nucleotide sequence ID" value="XM_047441355.1"/>
</dbReference>
<dbReference type="RefSeq" id="XP_047297312.1">
    <property type="nucleotide sequence ID" value="XM_047441356.1"/>
</dbReference>
<dbReference type="RefSeq" id="XP_054181565.1">
    <property type="nucleotide sequence ID" value="XM_054325590.1"/>
</dbReference>
<dbReference type="RefSeq" id="XP_054181566.1">
    <property type="nucleotide sequence ID" value="XM_054325591.1"/>
</dbReference>
<dbReference type="SMR" id="O60688"/>
<dbReference type="BioGRID" id="118923">
    <property type="interactions" value="15"/>
</dbReference>
<dbReference type="FunCoup" id="O60688">
    <property type="interactions" value="287"/>
</dbReference>
<dbReference type="IntAct" id="O60688">
    <property type="interactions" value="7"/>
</dbReference>
<dbReference type="STRING" id="9606.ENSP00000342832"/>
<dbReference type="BioMuta" id="YPEL1"/>
<dbReference type="MassIVE" id="O60688"/>
<dbReference type="PaxDb" id="9606-ENSP00000342832"/>
<dbReference type="PeptideAtlas" id="O60688"/>
<dbReference type="ProteomicsDB" id="49529"/>
<dbReference type="Pumba" id="O60688"/>
<dbReference type="Antibodypedia" id="45067">
    <property type="antibodies" value="63 antibodies from 21 providers"/>
</dbReference>
<dbReference type="DNASU" id="29799"/>
<dbReference type="Ensembl" id="ENST00000339468.8">
    <property type="protein sequence ID" value="ENSP00000342832.3"/>
    <property type="gene ID" value="ENSG00000100027.17"/>
</dbReference>
<dbReference type="GeneID" id="29799"/>
<dbReference type="KEGG" id="hsa:29799"/>
<dbReference type="MANE-Select" id="ENST00000339468.8">
    <property type="protein sequence ID" value="ENSP00000342832.3"/>
    <property type="RefSeq nucleotide sequence ID" value="NM_013313.5"/>
    <property type="RefSeq protein sequence ID" value="NP_037445.1"/>
</dbReference>
<dbReference type="UCSC" id="uc002zvl.4">
    <property type="organism name" value="human"/>
</dbReference>
<dbReference type="AGR" id="HGNC:12845"/>
<dbReference type="CTD" id="29799"/>
<dbReference type="DisGeNET" id="29799"/>
<dbReference type="GeneCards" id="YPEL1"/>
<dbReference type="HGNC" id="HGNC:12845">
    <property type="gene designation" value="YPEL1"/>
</dbReference>
<dbReference type="HPA" id="ENSG00000100027">
    <property type="expression patterns" value="Tissue enhanced (testis)"/>
</dbReference>
<dbReference type="MIM" id="608082">
    <property type="type" value="gene"/>
</dbReference>
<dbReference type="neXtProt" id="NX_O60688"/>
<dbReference type="OpenTargets" id="ENSG00000100027"/>
<dbReference type="PharmGKB" id="PA37436"/>
<dbReference type="VEuPathDB" id="HostDB:ENSG00000100027"/>
<dbReference type="eggNOG" id="KOG3399">
    <property type="taxonomic scope" value="Eukaryota"/>
</dbReference>
<dbReference type="GeneTree" id="ENSGT00940000161453"/>
<dbReference type="HOGENOM" id="CLU_043857_5_2_1"/>
<dbReference type="InParanoid" id="O60688"/>
<dbReference type="OMA" id="HLAFKGH"/>
<dbReference type="OrthoDB" id="6407410at2759"/>
<dbReference type="PAN-GO" id="O60688">
    <property type="GO annotations" value="0 GO annotations based on evolutionary models"/>
</dbReference>
<dbReference type="PhylomeDB" id="O60688"/>
<dbReference type="TreeFam" id="TF313936"/>
<dbReference type="PathwayCommons" id="O60688"/>
<dbReference type="SignaLink" id="O60688"/>
<dbReference type="BioGRID-ORCS" id="29799">
    <property type="hits" value="116 hits in 1171 CRISPR screens"/>
</dbReference>
<dbReference type="CD-CODE" id="8C2F96ED">
    <property type="entry name" value="Centrosome"/>
</dbReference>
<dbReference type="ChiTaRS" id="YPEL1">
    <property type="organism name" value="human"/>
</dbReference>
<dbReference type="GenomeRNAi" id="29799"/>
<dbReference type="Pharos" id="O60688">
    <property type="development level" value="Tbio"/>
</dbReference>
<dbReference type="PRO" id="PR:O60688"/>
<dbReference type="Proteomes" id="UP000005640">
    <property type="component" value="Chromosome 22"/>
</dbReference>
<dbReference type="RNAct" id="O60688">
    <property type="molecule type" value="protein"/>
</dbReference>
<dbReference type="Bgee" id="ENSG00000100027">
    <property type="expression patterns" value="Expressed in left testis and 149 other cell types or tissues"/>
</dbReference>
<dbReference type="ExpressionAtlas" id="O60688">
    <property type="expression patterns" value="baseline and differential"/>
</dbReference>
<dbReference type="GO" id="GO:0005634">
    <property type="term" value="C:nucleus"/>
    <property type="evidence" value="ECO:0007669"/>
    <property type="project" value="UniProtKB-SubCell"/>
</dbReference>
<dbReference type="GO" id="GO:0046872">
    <property type="term" value="F:metal ion binding"/>
    <property type="evidence" value="ECO:0007669"/>
    <property type="project" value="UniProtKB-KW"/>
</dbReference>
<dbReference type="InterPro" id="IPR034751">
    <property type="entry name" value="Yippee"/>
</dbReference>
<dbReference type="InterPro" id="IPR004910">
    <property type="entry name" value="Yippee/Mis18/Cereblon"/>
</dbReference>
<dbReference type="InterPro" id="IPR039058">
    <property type="entry name" value="Yippee_fam"/>
</dbReference>
<dbReference type="PANTHER" id="PTHR13848">
    <property type="entry name" value="PROTEIN YIPPEE-LIKE CG15309-RELATED"/>
    <property type="match status" value="1"/>
</dbReference>
<dbReference type="Pfam" id="PF03226">
    <property type="entry name" value="Yippee-Mis18"/>
    <property type="match status" value="1"/>
</dbReference>
<dbReference type="PROSITE" id="PS51792">
    <property type="entry name" value="YIPPEE"/>
    <property type="match status" value="1"/>
</dbReference>
<keyword id="KW-0479">Metal-binding</keyword>
<keyword id="KW-0539">Nucleus</keyword>
<keyword id="KW-1185">Reference proteome</keyword>
<keyword id="KW-0862">Zinc</keyword>
<evidence type="ECO:0000250" key="1"/>
<evidence type="ECO:0000255" key="2"/>
<evidence type="ECO:0000255" key="3">
    <source>
        <dbReference type="PROSITE-ProRule" id="PRU01128"/>
    </source>
</evidence>
<evidence type="ECO:0000305" key="4"/>
<organism>
    <name type="scientific">Homo sapiens</name>
    <name type="common">Human</name>
    <dbReference type="NCBI Taxonomy" id="9606"/>
    <lineage>
        <taxon>Eukaryota</taxon>
        <taxon>Metazoa</taxon>
        <taxon>Chordata</taxon>
        <taxon>Craniata</taxon>
        <taxon>Vertebrata</taxon>
        <taxon>Euteleostomi</taxon>
        <taxon>Mammalia</taxon>
        <taxon>Eutheria</taxon>
        <taxon>Euarchontoglires</taxon>
        <taxon>Primates</taxon>
        <taxon>Haplorrhini</taxon>
        <taxon>Catarrhini</taxon>
        <taxon>Hominidae</taxon>
        <taxon>Homo</taxon>
    </lineage>
</organism>
<accession>O60688</accession>
<accession>Q65ZA1</accession>
<accession>Q6GLI6</accession>
<proteinExistence type="inferred from homology"/>